<protein>
    <recommendedName>
        <fullName evidence="1">Signal recognition particle 54 kDa protein</fullName>
        <shortName evidence="1">SRP54</shortName>
        <ecNumber evidence="1">3.6.5.4</ecNumber>
    </recommendedName>
</protein>
<keyword id="KW-0963">Cytoplasm</keyword>
<keyword id="KW-0342">GTP-binding</keyword>
<keyword id="KW-0378">Hydrolase</keyword>
<keyword id="KW-0547">Nucleotide-binding</keyword>
<keyword id="KW-1185">Reference proteome</keyword>
<keyword id="KW-0687">Ribonucleoprotein</keyword>
<keyword id="KW-0694">RNA-binding</keyword>
<keyword id="KW-0733">Signal recognition particle</keyword>
<accession>C5A233</accession>
<feature type="chain" id="PRO_1000205017" description="Signal recognition particle 54 kDa protein">
    <location>
        <begin position="1"/>
        <end position="448"/>
    </location>
</feature>
<feature type="binding site" evidence="1">
    <location>
        <begin position="107"/>
        <end position="114"/>
    </location>
    <ligand>
        <name>GTP</name>
        <dbReference type="ChEBI" id="CHEBI:37565"/>
    </ligand>
</feature>
<feature type="binding site" evidence="1">
    <location>
        <begin position="189"/>
        <end position="193"/>
    </location>
    <ligand>
        <name>GTP</name>
        <dbReference type="ChEBI" id="CHEBI:37565"/>
    </ligand>
</feature>
<feature type="binding site" evidence="1">
    <location>
        <begin position="247"/>
        <end position="250"/>
    </location>
    <ligand>
        <name>GTP</name>
        <dbReference type="ChEBI" id="CHEBI:37565"/>
    </ligand>
</feature>
<comment type="function">
    <text evidence="1">Involved in targeting and insertion of nascent membrane proteins into the cytoplasmic membrane. Binds to the hydrophobic signal sequence of the ribosome-nascent chain (RNC) as it emerges from the ribosomes. The SRP-RNC complex is then targeted to the cytoplasmic membrane where it interacts with the SRP receptor FtsY.</text>
</comment>
<comment type="catalytic activity">
    <reaction evidence="1">
        <text>GTP + H2O = GDP + phosphate + H(+)</text>
        <dbReference type="Rhea" id="RHEA:19669"/>
        <dbReference type="ChEBI" id="CHEBI:15377"/>
        <dbReference type="ChEBI" id="CHEBI:15378"/>
        <dbReference type="ChEBI" id="CHEBI:37565"/>
        <dbReference type="ChEBI" id="CHEBI:43474"/>
        <dbReference type="ChEBI" id="CHEBI:58189"/>
        <dbReference type="EC" id="3.6.5.4"/>
    </reaction>
</comment>
<comment type="subunit">
    <text evidence="1">Part of the signal recognition particle protein translocation system, which is composed of SRP and FtsY. Archaeal SRP consists of a 7S RNA molecule of 300 nucleotides and two protein subunits: SRP54 and SRP19.</text>
</comment>
<comment type="subcellular location">
    <subcellularLocation>
        <location evidence="1">Cytoplasm</location>
    </subcellularLocation>
    <text evidence="1">The SRP-RNC complex is targeted to the cytoplasmic membrane.</text>
</comment>
<comment type="domain">
    <text evidence="1">Composed of three domains: the N-terminal N domain, which is responsible for interactions with the ribosome, the central G domain, which binds GTP, and the C-terminal M domain, which binds the RNA and the signal sequence of the RNC.</text>
</comment>
<comment type="similarity">
    <text evidence="1">Belongs to the GTP-binding SRP family. SRP54 subfamily.</text>
</comment>
<proteinExistence type="inferred from homology"/>
<reference key="1">
    <citation type="journal article" date="2007" name="Genome Biol.">
        <title>Genome analysis and genome-wide proteomics of Thermococcus gammatolerans, the most radioresistant organism known amongst the Archaea.</title>
        <authorList>
            <person name="Zivanovic Y."/>
            <person name="Armengaud J."/>
            <person name="Lagorce A."/>
            <person name="Leplat C."/>
            <person name="Guerin P."/>
            <person name="Dutertre M."/>
            <person name="Anthouard V."/>
            <person name="Forterre P."/>
            <person name="Wincker P."/>
            <person name="Confalonieri F."/>
        </authorList>
    </citation>
    <scope>NUCLEOTIDE SEQUENCE [LARGE SCALE GENOMIC DNA]</scope>
    <source>
        <strain>DSM 15229 / JCM 11827 / EJ3</strain>
    </source>
</reference>
<sequence length="448" mass="50201">MALEKLGKALNSALRKLARSSTVDEALIREVVRDIQRALIQSDVNVRLVLQLTKRIQERALNEKPPAGVSPREHVIKIVYEELTKLLGKEAVPLEIREKPTILLTVGIQGSGKTTTIAKLARHLQKRGYKVGLVCTDTWRPGAYYQLKQLVEPYNIEVFGDPGEKDAIKLAREGVEYFKDKGVDVIIVDTAGRHKEESGLIEEMKQISEAIKPHEVILVIDGTIGQQAYHQALAFKEATPIGSIIVTKLDGSAKGGGALSAVAATGAPIKFIGVGEKIDDLEPFDPKRFVSRLLGLGDIQGLLEKIEELQKEQEFKEEDVEKFLRGKFNLKDMYAQLEAMQKMGPLKQILQMIPGLGYSLPDEAVRVGEEKLRRYRIIMDSMTEEELENPDIINYSRIKRIARGSGTSTREVRELLAQYNQMRKMFKNLDKRKLAKMAKKFNFGGLGI</sequence>
<organism>
    <name type="scientific">Thermococcus gammatolerans (strain DSM 15229 / JCM 11827 / EJ3)</name>
    <dbReference type="NCBI Taxonomy" id="593117"/>
    <lineage>
        <taxon>Archaea</taxon>
        <taxon>Methanobacteriati</taxon>
        <taxon>Methanobacteriota</taxon>
        <taxon>Thermococci</taxon>
        <taxon>Thermococcales</taxon>
        <taxon>Thermococcaceae</taxon>
        <taxon>Thermococcus</taxon>
    </lineage>
</organism>
<dbReference type="EC" id="3.6.5.4" evidence="1"/>
<dbReference type="EMBL" id="CP001398">
    <property type="protein sequence ID" value="ACS34452.1"/>
    <property type="molecule type" value="Genomic_DNA"/>
</dbReference>
<dbReference type="RefSeq" id="WP_015859558.1">
    <property type="nucleotide sequence ID" value="NC_012804.1"/>
</dbReference>
<dbReference type="SMR" id="C5A233"/>
<dbReference type="STRING" id="593117.TGAM_1950"/>
<dbReference type="PaxDb" id="593117-TGAM_1950"/>
<dbReference type="GeneID" id="7987007"/>
<dbReference type="KEGG" id="tga:TGAM_1950"/>
<dbReference type="PATRIC" id="fig|593117.10.peg.1960"/>
<dbReference type="eggNOG" id="arCOG01228">
    <property type="taxonomic scope" value="Archaea"/>
</dbReference>
<dbReference type="HOGENOM" id="CLU_009301_6_1_2"/>
<dbReference type="OrthoDB" id="52849at2157"/>
<dbReference type="Proteomes" id="UP000001488">
    <property type="component" value="Chromosome"/>
</dbReference>
<dbReference type="GO" id="GO:0048500">
    <property type="term" value="C:signal recognition particle"/>
    <property type="evidence" value="ECO:0007669"/>
    <property type="project" value="UniProtKB-UniRule"/>
</dbReference>
<dbReference type="GO" id="GO:0008312">
    <property type="term" value="F:7S RNA binding"/>
    <property type="evidence" value="ECO:0007669"/>
    <property type="project" value="UniProtKB-UniRule"/>
</dbReference>
<dbReference type="GO" id="GO:0016887">
    <property type="term" value="F:ATP hydrolysis activity"/>
    <property type="evidence" value="ECO:0007669"/>
    <property type="project" value="InterPro"/>
</dbReference>
<dbReference type="GO" id="GO:0005525">
    <property type="term" value="F:GTP binding"/>
    <property type="evidence" value="ECO:0007669"/>
    <property type="project" value="UniProtKB-UniRule"/>
</dbReference>
<dbReference type="GO" id="GO:0003924">
    <property type="term" value="F:GTPase activity"/>
    <property type="evidence" value="ECO:0007669"/>
    <property type="project" value="UniProtKB-UniRule"/>
</dbReference>
<dbReference type="GO" id="GO:0006614">
    <property type="term" value="P:SRP-dependent cotranslational protein targeting to membrane"/>
    <property type="evidence" value="ECO:0007669"/>
    <property type="project" value="InterPro"/>
</dbReference>
<dbReference type="CDD" id="cd17875">
    <property type="entry name" value="SRP54_G"/>
    <property type="match status" value="1"/>
</dbReference>
<dbReference type="FunFam" id="3.40.50.300:FF:000022">
    <property type="entry name" value="Signal recognition particle 54 kDa subunit"/>
    <property type="match status" value="1"/>
</dbReference>
<dbReference type="Gene3D" id="3.40.50.300">
    <property type="entry name" value="P-loop containing nucleotide triphosphate hydrolases"/>
    <property type="match status" value="1"/>
</dbReference>
<dbReference type="Gene3D" id="1.20.120.140">
    <property type="entry name" value="Signal recognition particle SRP54, nucleotide-binding domain"/>
    <property type="match status" value="1"/>
</dbReference>
<dbReference type="Gene3D" id="1.10.260.30">
    <property type="entry name" value="Signal recognition particle, SRP54 subunit, M-domain"/>
    <property type="match status" value="1"/>
</dbReference>
<dbReference type="HAMAP" id="MF_00306">
    <property type="entry name" value="SRP54"/>
    <property type="match status" value="1"/>
</dbReference>
<dbReference type="InterPro" id="IPR003593">
    <property type="entry name" value="AAA+_ATPase"/>
</dbReference>
<dbReference type="InterPro" id="IPR027417">
    <property type="entry name" value="P-loop_NTPase"/>
</dbReference>
<dbReference type="InterPro" id="IPR036891">
    <property type="entry name" value="Signal_recog_part_SRP54_M_sf"/>
</dbReference>
<dbReference type="InterPro" id="IPR013822">
    <property type="entry name" value="Signal_recog_particl_SRP54_hlx"/>
</dbReference>
<dbReference type="InterPro" id="IPR004125">
    <property type="entry name" value="Signal_recog_particle_SRP54_M"/>
</dbReference>
<dbReference type="InterPro" id="IPR036225">
    <property type="entry name" value="SRP/SRP_N"/>
</dbReference>
<dbReference type="InterPro" id="IPR022941">
    <property type="entry name" value="SRP54"/>
</dbReference>
<dbReference type="InterPro" id="IPR000897">
    <property type="entry name" value="SRP54_GTPase_dom"/>
</dbReference>
<dbReference type="InterPro" id="IPR042101">
    <property type="entry name" value="SRP54_N_sf"/>
</dbReference>
<dbReference type="PANTHER" id="PTHR11564">
    <property type="entry name" value="SIGNAL RECOGNITION PARTICLE 54K PROTEIN SRP54"/>
    <property type="match status" value="1"/>
</dbReference>
<dbReference type="PANTHER" id="PTHR11564:SF5">
    <property type="entry name" value="SIGNAL RECOGNITION PARTICLE SUBUNIT SRP54"/>
    <property type="match status" value="1"/>
</dbReference>
<dbReference type="Pfam" id="PF00448">
    <property type="entry name" value="SRP54"/>
    <property type="match status" value="1"/>
</dbReference>
<dbReference type="Pfam" id="PF02881">
    <property type="entry name" value="SRP54_N"/>
    <property type="match status" value="1"/>
</dbReference>
<dbReference type="Pfam" id="PF02978">
    <property type="entry name" value="SRP_SPB"/>
    <property type="match status" value="1"/>
</dbReference>
<dbReference type="SMART" id="SM00382">
    <property type="entry name" value="AAA"/>
    <property type="match status" value="1"/>
</dbReference>
<dbReference type="SMART" id="SM00962">
    <property type="entry name" value="SRP54"/>
    <property type="match status" value="1"/>
</dbReference>
<dbReference type="SMART" id="SM00963">
    <property type="entry name" value="SRP54_N"/>
    <property type="match status" value="1"/>
</dbReference>
<dbReference type="SUPFAM" id="SSF47364">
    <property type="entry name" value="Domain of the SRP/SRP receptor G-proteins"/>
    <property type="match status" value="1"/>
</dbReference>
<dbReference type="SUPFAM" id="SSF52540">
    <property type="entry name" value="P-loop containing nucleoside triphosphate hydrolases"/>
    <property type="match status" value="1"/>
</dbReference>
<dbReference type="SUPFAM" id="SSF47446">
    <property type="entry name" value="Signal peptide-binding domain"/>
    <property type="match status" value="1"/>
</dbReference>
<dbReference type="PROSITE" id="PS00300">
    <property type="entry name" value="SRP54"/>
    <property type="match status" value="1"/>
</dbReference>
<gene>
    <name evidence="1" type="primary">srp54</name>
    <name type="ordered locus">TGAM_1950</name>
</gene>
<evidence type="ECO:0000255" key="1">
    <source>
        <dbReference type="HAMAP-Rule" id="MF_00306"/>
    </source>
</evidence>
<name>SRP54_THEGJ</name>